<protein>
    <recommendedName>
        <fullName evidence="1">Large ribosomal subunit protein uL1</fullName>
    </recommendedName>
    <alternativeName>
        <fullName evidence="2">50S ribosomal protein L1</fullName>
    </alternativeName>
</protein>
<sequence length="229" mass="24332">MAKLTKKQKEAASKIEKNKLYSLKDAAALLKVVASAKFDESVDIAVRLGVDPRKANQMVRGVVTLPHGTGKDVKVLALVTPDKEAEAREAGADHVGLDDYLQKIKDGWTDVDVIITMPAVMGKLGPLGRILGPRGLMPNPKTGTVTMDVAKAVQEVKAGKIDFKVDKTGIVHAGIGKVSFGAEQIVDNAHEIIQTLIKLKPTAAKGTYIKGIHLTSTMSPAIALDPKAV</sequence>
<feature type="chain" id="PRO_1000086285" description="Large ribosomal subunit protein uL1">
    <location>
        <begin position="1"/>
        <end position="229"/>
    </location>
</feature>
<proteinExistence type="inferred from homology"/>
<name>RL1_FLAJ1</name>
<accession>A5FIJ0</accession>
<gene>
    <name evidence="1" type="primary">rplA</name>
    <name type="ordered locus">Fjoh_1940</name>
</gene>
<keyword id="KW-0678">Repressor</keyword>
<keyword id="KW-0687">Ribonucleoprotein</keyword>
<keyword id="KW-0689">Ribosomal protein</keyword>
<keyword id="KW-0694">RNA-binding</keyword>
<keyword id="KW-0699">rRNA-binding</keyword>
<keyword id="KW-0810">Translation regulation</keyword>
<keyword id="KW-0820">tRNA-binding</keyword>
<evidence type="ECO:0000255" key="1">
    <source>
        <dbReference type="HAMAP-Rule" id="MF_01318"/>
    </source>
</evidence>
<evidence type="ECO:0000305" key="2"/>
<dbReference type="EMBL" id="CP000685">
    <property type="protein sequence ID" value="ABQ04972.1"/>
    <property type="molecule type" value="Genomic_DNA"/>
</dbReference>
<dbReference type="RefSeq" id="WP_012024013.1">
    <property type="nucleotide sequence ID" value="NZ_MUGZ01000012.1"/>
</dbReference>
<dbReference type="SMR" id="A5FIJ0"/>
<dbReference type="STRING" id="376686.Fjoh_1940"/>
<dbReference type="KEGG" id="fjo:Fjoh_1940"/>
<dbReference type="eggNOG" id="COG0081">
    <property type="taxonomic scope" value="Bacteria"/>
</dbReference>
<dbReference type="HOGENOM" id="CLU_062853_0_0_10"/>
<dbReference type="OrthoDB" id="9803740at2"/>
<dbReference type="Proteomes" id="UP000006694">
    <property type="component" value="Chromosome"/>
</dbReference>
<dbReference type="GO" id="GO:0015934">
    <property type="term" value="C:large ribosomal subunit"/>
    <property type="evidence" value="ECO:0007669"/>
    <property type="project" value="InterPro"/>
</dbReference>
<dbReference type="GO" id="GO:0019843">
    <property type="term" value="F:rRNA binding"/>
    <property type="evidence" value="ECO:0007669"/>
    <property type="project" value="UniProtKB-UniRule"/>
</dbReference>
<dbReference type="GO" id="GO:0003735">
    <property type="term" value="F:structural constituent of ribosome"/>
    <property type="evidence" value="ECO:0007669"/>
    <property type="project" value="InterPro"/>
</dbReference>
<dbReference type="GO" id="GO:0000049">
    <property type="term" value="F:tRNA binding"/>
    <property type="evidence" value="ECO:0007669"/>
    <property type="project" value="UniProtKB-KW"/>
</dbReference>
<dbReference type="GO" id="GO:0006417">
    <property type="term" value="P:regulation of translation"/>
    <property type="evidence" value="ECO:0007669"/>
    <property type="project" value="UniProtKB-KW"/>
</dbReference>
<dbReference type="GO" id="GO:0006412">
    <property type="term" value="P:translation"/>
    <property type="evidence" value="ECO:0007669"/>
    <property type="project" value="UniProtKB-UniRule"/>
</dbReference>
<dbReference type="CDD" id="cd00403">
    <property type="entry name" value="Ribosomal_L1"/>
    <property type="match status" value="1"/>
</dbReference>
<dbReference type="FunFam" id="3.40.50.790:FF:000001">
    <property type="entry name" value="50S ribosomal protein L1"/>
    <property type="match status" value="1"/>
</dbReference>
<dbReference type="Gene3D" id="3.30.190.20">
    <property type="match status" value="1"/>
</dbReference>
<dbReference type="Gene3D" id="3.40.50.790">
    <property type="match status" value="1"/>
</dbReference>
<dbReference type="HAMAP" id="MF_01318_B">
    <property type="entry name" value="Ribosomal_uL1_B"/>
    <property type="match status" value="1"/>
</dbReference>
<dbReference type="InterPro" id="IPR005878">
    <property type="entry name" value="Ribosom_uL1_bac-type"/>
</dbReference>
<dbReference type="InterPro" id="IPR002143">
    <property type="entry name" value="Ribosomal_uL1"/>
</dbReference>
<dbReference type="InterPro" id="IPR023674">
    <property type="entry name" value="Ribosomal_uL1-like"/>
</dbReference>
<dbReference type="InterPro" id="IPR028364">
    <property type="entry name" value="Ribosomal_uL1/biogenesis"/>
</dbReference>
<dbReference type="InterPro" id="IPR016095">
    <property type="entry name" value="Ribosomal_uL1_3-a/b-sand"/>
</dbReference>
<dbReference type="InterPro" id="IPR023673">
    <property type="entry name" value="Ribosomal_uL1_CS"/>
</dbReference>
<dbReference type="NCBIfam" id="TIGR01169">
    <property type="entry name" value="rplA_bact"/>
    <property type="match status" value="1"/>
</dbReference>
<dbReference type="PANTHER" id="PTHR36427">
    <property type="entry name" value="54S RIBOSOMAL PROTEIN L1, MITOCHONDRIAL"/>
    <property type="match status" value="1"/>
</dbReference>
<dbReference type="PANTHER" id="PTHR36427:SF3">
    <property type="entry name" value="LARGE RIBOSOMAL SUBUNIT PROTEIN UL1M"/>
    <property type="match status" value="1"/>
</dbReference>
<dbReference type="Pfam" id="PF00687">
    <property type="entry name" value="Ribosomal_L1"/>
    <property type="match status" value="1"/>
</dbReference>
<dbReference type="PIRSF" id="PIRSF002155">
    <property type="entry name" value="Ribosomal_L1"/>
    <property type="match status" value="1"/>
</dbReference>
<dbReference type="SUPFAM" id="SSF56808">
    <property type="entry name" value="Ribosomal protein L1"/>
    <property type="match status" value="1"/>
</dbReference>
<dbReference type="PROSITE" id="PS01199">
    <property type="entry name" value="RIBOSOMAL_L1"/>
    <property type="match status" value="1"/>
</dbReference>
<comment type="function">
    <text evidence="1">Binds directly to 23S rRNA. The L1 stalk is quite mobile in the ribosome, and is involved in E site tRNA release.</text>
</comment>
<comment type="function">
    <text evidence="1">Protein L1 is also a translational repressor protein, it controls the translation of the L11 operon by binding to its mRNA.</text>
</comment>
<comment type="subunit">
    <text evidence="1">Part of the 50S ribosomal subunit.</text>
</comment>
<comment type="similarity">
    <text evidence="1">Belongs to the universal ribosomal protein uL1 family.</text>
</comment>
<organism>
    <name type="scientific">Flavobacterium johnsoniae (strain ATCC 17061 / DSM 2064 / JCM 8514 / BCRC 14874 / CCUG 350202 / NBRC 14942 / NCIMB 11054 / UW101)</name>
    <name type="common">Cytophaga johnsonae</name>
    <dbReference type="NCBI Taxonomy" id="376686"/>
    <lineage>
        <taxon>Bacteria</taxon>
        <taxon>Pseudomonadati</taxon>
        <taxon>Bacteroidota</taxon>
        <taxon>Flavobacteriia</taxon>
        <taxon>Flavobacteriales</taxon>
        <taxon>Flavobacteriaceae</taxon>
        <taxon>Flavobacterium</taxon>
    </lineage>
</organism>
<reference key="1">
    <citation type="journal article" date="2009" name="Appl. Environ. Microbiol.">
        <title>Novel features of the polysaccharide-digesting gliding bacterium Flavobacterium johnsoniae as revealed by genome sequence analysis.</title>
        <authorList>
            <person name="McBride M.J."/>
            <person name="Xie G."/>
            <person name="Martens E.C."/>
            <person name="Lapidus A."/>
            <person name="Henrissat B."/>
            <person name="Rhodes R.G."/>
            <person name="Goltsman E."/>
            <person name="Wang W."/>
            <person name="Xu J."/>
            <person name="Hunnicutt D.W."/>
            <person name="Staroscik A.M."/>
            <person name="Hoover T.R."/>
            <person name="Cheng Y.Q."/>
            <person name="Stein J.L."/>
        </authorList>
    </citation>
    <scope>NUCLEOTIDE SEQUENCE [LARGE SCALE GENOMIC DNA]</scope>
    <source>
        <strain>ATCC 17061 / DSM 2064 / JCM 8514 / BCRC 14874 / CCUG 350202 / NBRC 14942 / NCIMB 11054 / UW101</strain>
    </source>
</reference>